<organism>
    <name type="scientific">Yersinia pseudotuberculosis serotype O:1b (strain IP 31758)</name>
    <dbReference type="NCBI Taxonomy" id="349747"/>
    <lineage>
        <taxon>Bacteria</taxon>
        <taxon>Pseudomonadati</taxon>
        <taxon>Pseudomonadota</taxon>
        <taxon>Gammaproteobacteria</taxon>
        <taxon>Enterobacterales</taxon>
        <taxon>Yersiniaceae</taxon>
        <taxon>Yersinia</taxon>
    </lineage>
</organism>
<proteinExistence type="inferred from homology"/>
<gene>
    <name evidence="1" type="primary">glnE</name>
    <name type="ordered locus">YpsIP31758_0563</name>
</gene>
<dbReference type="EC" id="2.7.7.89" evidence="1"/>
<dbReference type="EC" id="2.7.7.42" evidence="1"/>
<dbReference type="EMBL" id="CP000720">
    <property type="protein sequence ID" value="ABS47652.1"/>
    <property type="molecule type" value="Genomic_DNA"/>
</dbReference>
<dbReference type="RefSeq" id="WP_012104465.1">
    <property type="nucleotide sequence ID" value="NC_009708.1"/>
</dbReference>
<dbReference type="SMR" id="A7FE78"/>
<dbReference type="KEGG" id="ypi:YpsIP31758_0563"/>
<dbReference type="HOGENOM" id="CLU_006233_0_1_6"/>
<dbReference type="Proteomes" id="UP000002412">
    <property type="component" value="Chromosome"/>
</dbReference>
<dbReference type="GO" id="GO:0005829">
    <property type="term" value="C:cytosol"/>
    <property type="evidence" value="ECO:0007669"/>
    <property type="project" value="TreeGrafter"/>
</dbReference>
<dbReference type="GO" id="GO:0008882">
    <property type="term" value="F:[glutamate-ammonia-ligase] adenylyltransferase activity"/>
    <property type="evidence" value="ECO:0007669"/>
    <property type="project" value="UniProtKB-UniRule"/>
</dbReference>
<dbReference type="GO" id="GO:0047388">
    <property type="term" value="F:[glutamine synthetase]-adenylyl-L-tyrosine phosphorylase activity"/>
    <property type="evidence" value="ECO:0007669"/>
    <property type="project" value="UniProtKB-EC"/>
</dbReference>
<dbReference type="GO" id="GO:0005524">
    <property type="term" value="F:ATP binding"/>
    <property type="evidence" value="ECO:0007669"/>
    <property type="project" value="UniProtKB-UniRule"/>
</dbReference>
<dbReference type="GO" id="GO:0000287">
    <property type="term" value="F:magnesium ion binding"/>
    <property type="evidence" value="ECO:0007669"/>
    <property type="project" value="UniProtKB-UniRule"/>
</dbReference>
<dbReference type="GO" id="GO:0000820">
    <property type="term" value="P:regulation of glutamine family amino acid metabolic process"/>
    <property type="evidence" value="ECO:0007669"/>
    <property type="project" value="UniProtKB-UniRule"/>
</dbReference>
<dbReference type="CDD" id="cd05401">
    <property type="entry name" value="NT_GlnE_GlnD_like"/>
    <property type="match status" value="2"/>
</dbReference>
<dbReference type="FunFam" id="1.10.4050.10:FF:000001">
    <property type="entry name" value="Bifunctional glutamine synthetase adenylyltransferase/adenylyl-removing enzyme"/>
    <property type="match status" value="1"/>
</dbReference>
<dbReference type="FunFam" id="1.20.120.1510:FF:000001">
    <property type="entry name" value="Bifunctional glutamine synthetase adenylyltransferase/adenylyl-removing enzyme"/>
    <property type="match status" value="1"/>
</dbReference>
<dbReference type="FunFam" id="1.20.120.330:FF:000005">
    <property type="entry name" value="Bifunctional glutamine synthetase adenylyltransferase/adenylyl-removing enzyme"/>
    <property type="match status" value="1"/>
</dbReference>
<dbReference type="FunFam" id="1.20.120.330:FF:000008">
    <property type="entry name" value="Bifunctional glutamine synthetase adenylyltransferase/adenylyl-removing enzyme"/>
    <property type="match status" value="1"/>
</dbReference>
<dbReference type="FunFam" id="3.30.460.10:FF:000009">
    <property type="entry name" value="Bifunctional glutamine synthetase adenylyltransferase/adenylyl-removing enzyme"/>
    <property type="match status" value="1"/>
</dbReference>
<dbReference type="FunFam" id="3.30.460.10:FF:000014">
    <property type="entry name" value="Bifunctional glutamine synthetase adenylyltransferase/adenylyl-removing enzyme"/>
    <property type="match status" value="1"/>
</dbReference>
<dbReference type="Gene3D" id="1.20.120.1510">
    <property type="match status" value="1"/>
</dbReference>
<dbReference type="Gene3D" id="3.30.460.10">
    <property type="entry name" value="Beta Polymerase, domain 2"/>
    <property type="match status" value="2"/>
</dbReference>
<dbReference type="Gene3D" id="1.10.4050.10">
    <property type="entry name" value="Glutamine synthase adenylyltransferase GlnE"/>
    <property type="match status" value="1"/>
</dbReference>
<dbReference type="Gene3D" id="1.20.120.330">
    <property type="entry name" value="Nucleotidyltransferases domain 2"/>
    <property type="match status" value="2"/>
</dbReference>
<dbReference type="HAMAP" id="MF_00802">
    <property type="entry name" value="GlnE"/>
    <property type="match status" value="1"/>
</dbReference>
<dbReference type="InterPro" id="IPR023057">
    <property type="entry name" value="GlnE"/>
</dbReference>
<dbReference type="InterPro" id="IPR005190">
    <property type="entry name" value="GlnE_rpt_dom"/>
</dbReference>
<dbReference type="InterPro" id="IPR043519">
    <property type="entry name" value="NT_sf"/>
</dbReference>
<dbReference type="InterPro" id="IPR013546">
    <property type="entry name" value="PII_UdlTrfase/GS_AdlTrfase"/>
</dbReference>
<dbReference type="NCBIfam" id="NF008292">
    <property type="entry name" value="PRK11072.1"/>
    <property type="match status" value="1"/>
</dbReference>
<dbReference type="PANTHER" id="PTHR30621:SF0">
    <property type="entry name" value="BIFUNCTIONAL GLUTAMINE SYNTHETASE ADENYLYLTRANSFERASE_ADENYLYL-REMOVING ENZYME"/>
    <property type="match status" value="1"/>
</dbReference>
<dbReference type="PANTHER" id="PTHR30621">
    <property type="entry name" value="GLUTAMINE SYNTHETASE ADENYLYLTRANSFERASE"/>
    <property type="match status" value="1"/>
</dbReference>
<dbReference type="Pfam" id="PF08335">
    <property type="entry name" value="GlnD_UR_UTase"/>
    <property type="match status" value="2"/>
</dbReference>
<dbReference type="Pfam" id="PF03710">
    <property type="entry name" value="GlnE"/>
    <property type="match status" value="2"/>
</dbReference>
<dbReference type="SUPFAM" id="SSF81301">
    <property type="entry name" value="Nucleotidyltransferase"/>
    <property type="match status" value="2"/>
</dbReference>
<dbReference type="SUPFAM" id="SSF81593">
    <property type="entry name" value="Nucleotidyltransferase substrate binding subunit/domain"/>
    <property type="match status" value="2"/>
</dbReference>
<keyword id="KW-0067">ATP-binding</keyword>
<keyword id="KW-0460">Magnesium</keyword>
<keyword id="KW-0511">Multifunctional enzyme</keyword>
<keyword id="KW-0547">Nucleotide-binding</keyword>
<keyword id="KW-0548">Nucleotidyltransferase</keyword>
<keyword id="KW-0808">Transferase</keyword>
<accession>A7FE78</accession>
<evidence type="ECO:0000255" key="1">
    <source>
        <dbReference type="HAMAP-Rule" id="MF_00802"/>
    </source>
</evidence>
<sequence length="951" mass="108320">MLPLPSELQIQAQSIKQRFSELPAPPDLRDEDIAVLALSDFVSDMLLIHPQWLEELHQQPPQPQEWQYYSQWLSQALAGVQDEAALLTALRLFRRRVMVRIAWSQVLQTSGTAETLQQLSTLAESMIIAARDWLYQVCCRELGTPCNRQGVPQPLLILGMGKLGGGELNFSSDIDLIFAYPENGQTQGGRRELDNAQFFTRLGQRLIKALDQHTIDGFVYRVDMRLRPFGDSGPLVLSFAALEDYYQEQGRDWERYAMVKARLMGGADDPYSQELRQMLRPFVFRRYIDFSVIQSLRNMKGMIAREVRRRGLKDNIKLGAGGIREIEFITQVFQLIRGGREPRLQERALLPTLQAVAELGLLPEQQVADLSGSYLFLRRLENLLQAIADEQTQTLPNDPLNQARLAWGMGYADWAAMSTALENHMQAVRVVFDDLIGDETPDIGEDPSHGLYKSLWQDVLEESDLAPLTPHLEEAARRQLLATISGFRHDVDKRTIGPRGREVLDQLMPRLFAEVCSRPDANVALSRLILLLLSIVTRTTYLELLVEYHAALKHVIRLCSASPMVASQLARYPLLLDELLDPQSLYQPLAPSAYRDELRQYLLRVPEDDEEQQLEALRQFKQAQQLRIAAGDITEALPVMKVSDHLTYLAEAIIDAVIQQAWNQMVARYGQPSHLQQSEGRGFAVIGYGKLGGWELGYSSDLDLVFLLDCPLDVMTDGDRSIDGRQFYLRLAQRIMHLFSTRTSSGILYEVDARLRPSGEAGMLVSTIEAFADYQRNEAWTWEHQALVRARIVYGSPKLHQQFDAIRQQILCRHREDPQLQQEVREMREKMRNHLGSKQRDIFDIKADAGGITDIEFIAQYLVLRYAASEPRLTRWSDNVRIFESMAHYDIMSPEEAAALTRAYVTMRDEIHHLALQEQSSKVAADSFIAEREQVAASWHKWLAANDANVS</sequence>
<name>GLNE_YERP3</name>
<comment type="function">
    <text evidence="1">Involved in the regulation of glutamine synthetase GlnA, a key enzyme in the process to assimilate ammonia. When cellular nitrogen levels are high, the C-terminal adenylyl transferase (AT) inactivates GlnA by covalent transfer of an adenylyl group from ATP to specific tyrosine residue of GlnA, thus reducing its activity. Conversely, when nitrogen levels are low, the N-terminal adenylyl removase (AR) activates GlnA by removing the adenylyl group by phosphorolysis, increasing its activity. The regulatory region of GlnE binds the signal transduction protein PII (GlnB) which indicates the nitrogen status of the cell.</text>
</comment>
<comment type="catalytic activity">
    <reaction evidence="1">
        <text>[glutamine synthetase]-O(4)-(5'-adenylyl)-L-tyrosine + phosphate = [glutamine synthetase]-L-tyrosine + ADP</text>
        <dbReference type="Rhea" id="RHEA:43716"/>
        <dbReference type="Rhea" id="RHEA-COMP:10660"/>
        <dbReference type="Rhea" id="RHEA-COMP:10661"/>
        <dbReference type="ChEBI" id="CHEBI:43474"/>
        <dbReference type="ChEBI" id="CHEBI:46858"/>
        <dbReference type="ChEBI" id="CHEBI:83624"/>
        <dbReference type="ChEBI" id="CHEBI:456216"/>
        <dbReference type="EC" id="2.7.7.89"/>
    </reaction>
</comment>
<comment type="catalytic activity">
    <reaction evidence="1">
        <text>[glutamine synthetase]-L-tyrosine + ATP = [glutamine synthetase]-O(4)-(5'-adenylyl)-L-tyrosine + diphosphate</text>
        <dbReference type="Rhea" id="RHEA:18589"/>
        <dbReference type="Rhea" id="RHEA-COMP:10660"/>
        <dbReference type="Rhea" id="RHEA-COMP:10661"/>
        <dbReference type="ChEBI" id="CHEBI:30616"/>
        <dbReference type="ChEBI" id="CHEBI:33019"/>
        <dbReference type="ChEBI" id="CHEBI:46858"/>
        <dbReference type="ChEBI" id="CHEBI:83624"/>
        <dbReference type="EC" id="2.7.7.42"/>
    </reaction>
</comment>
<comment type="cofactor">
    <cofactor evidence="1">
        <name>Mg(2+)</name>
        <dbReference type="ChEBI" id="CHEBI:18420"/>
    </cofactor>
</comment>
<comment type="similarity">
    <text evidence="1">Belongs to the GlnE family.</text>
</comment>
<protein>
    <recommendedName>
        <fullName evidence="1">Bifunctional glutamine synthetase adenylyltransferase/adenylyl-removing enzyme</fullName>
    </recommendedName>
    <alternativeName>
        <fullName evidence="1">ATP:glutamine synthetase adenylyltransferase</fullName>
    </alternativeName>
    <alternativeName>
        <fullName evidence="1">ATase</fullName>
    </alternativeName>
    <domain>
        <recommendedName>
            <fullName evidence="1">Glutamine synthetase adenylyl-L-tyrosine phosphorylase</fullName>
            <ecNumber evidence="1">2.7.7.89</ecNumber>
        </recommendedName>
        <alternativeName>
            <fullName evidence="1">Adenylyl removase</fullName>
            <shortName evidence="1">AR</shortName>
            <shortName evidence="1">AT-N</shortName>
        </alternativeName>
    </domain>
    <domain>
        <recommendedName>
            <fullName evidence="1">Glutamine synthetase adenylyl transferase</fullName>
            <ecNumber evidence="1">2.7.7.42</ecNumber>
        </recommendedName>
        <alternativeName>
            <fullName evidence="1">Adenylyl transferase</fullName>
            <shortName evidence="1">AT</shortName>
            <shortName evidence="1">AT-C</shortName>
        </alternativeName>
    </domain>
</protein>
<reference key="1">
    <citation type="journal article" date="2007" name="PLoS Genet.">
        <title>The complete genome sequence of Yersinia pseudotuberculosis IP31758, the causative agent of Far East scarlet-like fever.</title>
        <authorList>
            <person name="Eppinger M."/>
            <person name="Rosovitz M.J."/>
            <person name="Fricke W.F."/>
            <person name="Rasko D.A."/>
            <person name="Kokorina G."/>
            <person name="Fayolle C."/>
            <person name="Lindler L.E."/>
            <person name="Carniel E."/>
            <person name="Ravel J."/>
        </authorList>
    </citation>
    <scope>NUCLEOTIDE SEQUENCE [LARGE SCALE GENOMIC DNA]</scope>
    <source>
        <strain>IP 31758</strain>
    </source>
</reference>
<feature type="chain" id="PRO_1000062267" description="Bifunctional glutamine synthetase adenylyltransferase/adenylyl-removing enzyme">
    <location>
        <begin position="1"/>
        <end position="951"/>
    </location>
</feature>
<feature type="region of interest" description="Adenylyl removase" evidence="1">
    <location>
        <begin position="1"/>
        <end position="440"/>
    </location>
</feature>
<feature type="region of interest" description="Adenylyl transferase" evidence="1">
    <location>
        <begin position="449"/>
        <end position="951"/>
    </location>
</feature>